<feature type="chain" id="PRO_1000024013" description="Dihydroorotase">
    <location>
        <begin position="1"/>
        <end position="347"/>
    </location>
</feature>
<feature type="active site" evidence="1">
    <location>
        <position position="251"/>
    </location>
</feature>
<feature type="binding site" evidence="1">
    <location>
        <position position="17"/>
    </location>
    <ligand>
        <name>Zn(2+)</name>
        <dbReference type="ChEBI" id="CHEBI:29105"/>
        <label>1</label>
    </ligand>
</feature>
<feature type="binding site" evidence="1">
    <location>
        <begin position="19"/>
        <end position="21"/>
    </location>
    <ligand>
        <name>substrate</name>
    </ligand>
</feature>
<feature type="binding site" evidence="1">
    <location>
        <position position="19"/>
    </location>
    <ligand>
        <name>Zn(2+)</name>
        <dbReference type="ChEBI" id="CHEBI:29105"/>
        <label>1</label>
    </ligand>
</feature>
<feature type="binding site" evidence="1">
    <location>
        <position position="45"/>
    </location>
    <ligand>
        <name>substrate</name>
    </ligand>
</feature>
<feature type="binding site" description="via carbamate group" evidence="1">
    <location>
        <position position="103"/>
    </location>
    <ligand>
        <name>Zn(2+)</name>
        <dbReference type="ChEBI" id="CHEBI:29105"/>
        <label>1</label>
    </ligand>
</feature>
<feature type="binding site" description="via carbamate group" evidence="1">
    <location>
        <position position="103"/>
    </location>
    <ligand>
        <name>Zn(2+)</name>
        <dbReference type="ChEBI" id="CHEBI:29105"/>
        <label>2</label>
    </ligand>
</feature>
<feature type="binding site" evidence="1">
    <location>
        <position position="140"/>
    </location>
    <ligand>
        <name>substrate</name>
    </ligand>
</feature>
<feature type="binding site" evidence="1">
    <location>
        <position position="140"/>
    </location>
    <ligand>
        <name>Zn(2+)</name>
        <dbReference type="ChEBI" id="CHEBI:29105"/>
        <label>2</label>
    </ligand>
</feature>
<feature type="binding site" evidence="1">
    <location>
        <position position="178"/>
    </location>
    <ligand>
        <name>Zn(2+)</name>
        <dbReference type="ChEBI" id="CHEBI:29105"/>
        <label>2</label>
    </ligand>
</feature>
<feature type="binding site" evidence="1">
    <location>
        <position position="223"/>
    </location>
    <ligand>
        <name>substrate</name>
    </ligand>
</feature>
<feature type="binding site" evidence="1">
    <location>
        <position position="251"/>
    </location>
    <ligand>
        <name>Zn(2+)</name>
        <dbReference type="ChEBI" id="CHEBI:29105"/>
        <label>1</label>
    </ligand>
</feature>
<feature type="binding site" evidence="1">
    <location>
        <position position="255"/>
    </location>
    <ligand>
        <name>substrate</name>
    </ligand>
</feature>
<feature type="binding site" evidence="1">
    <location>
        <position position="267"/>
    </location>
    <ligand>
        <name>substrate</name>
    </ligand>
</feature>
<feature type="modified residue" description="N6-carboxylysine" evidence="1">
    <location>
        <position position="103"/>
    </location>
</feature>
<name>PYRC_PECAS</name>
<reference key="1">
    <citation type="journal article" date="2004" name="Proc. Natl. Acad. Sci. U.S.A.">
        <title>Genome sequence of the enterobacterial phytopathogen Erwinia carotovora subsp. atroseptica and characterization of virulence factors.</title>
        <authorList>
            <person name="Bell K.S."/>
            <person name="Sebaihia M."/>
            <person name="Pritchard L."/>
            <person name="Holden M.T.G."/>
            <person name="Hyman L.J."/>
            <person name="Holeva M.C."/>
            <person name="Thomson N.R."/>
            <person name="Bentley S.D."/>
            <person name="Churcher L.J.C."/>
            <person name="Mungall K."/>
            <person name="Atkin R."/>
            <person name="Bason N."/>
            <person name="Brooks K."/>
            <person name="Chillingworth T."/>
            <person name="Clark K."/>
            <person name="Doggett J."/>
            <person name="Fraser A."/>
            <person name="Hance Z."/>
            <person name="Hauser H."/>
            <person name="Jagels K."/>
            <person name="Moule S."/>
            <person name="Norbertczak H."/>
            <person name="Ormond D."/>
            <person name="Price C."/>
            <person name="Quail M.A."/>
            <person name="Sanders M."/>
            <person name="Walker D."/>
            <person name="Whitehead S."/>
            <person name="Salmond G.P.C."/>
            <person name="Birch P.R.J."/>
            <person name="Parkhill J."/>
            <person name="Toth I.K."/>
        </authorList>
    </citation>
    <scope>NUCLEOTIDE SEQUENCE [LARGE SCALE GENOMIC DNA]</scope>
    <source>
        <strain>SCRI 1043 / ATCC BAA-672</strain>
    </source>
</reference>
<keyword id="KW-0378">Hydrolase</keyword>
<keyword id="KW-0479">Metal-binding</keyword>
<keyword id="KW-0665">Pyrimidine biosynthesis</keyword>
<keyword id="KW-1185">Reference proteome</keyword>
<keyword id="KW-0862">Zinc</keyword>
<accession>Q6D698</accession>
<proteinExistence type="inferred from homology"/>
<gene>
    <name evidence="1" type="primary">pyrC</name>
    <name type="ordered locus">ECA1787</name>
</gene>
<sequence length="347" mass="38615">MTAQHTILKIRRPDDWHIHLRDDRMLETVLPYTSRFFGRAIVMPNLTPPITSVASAIAYRQRILAAVPQGDNFHPLMTCYLTDTLDANEIVSGFEQGVFTAAKLYPANATTNSSHGVTSVATISGILEKMQKIGMPLLIHGEVTDPAIDIFDREARFIETILEPLRQDFPELKVVLEHITTKEAAEYVIAGNDYLAATITPQHLMFNRNHMLVGGIRTHLYCLPILKRNTHQQALREAVASGCDRLFLGTDSAPHAKHRKESSCGCAGVFNAQAALSTYATVFEEMNALDKLEAFCSLNGPRFYGLPVNDSWIELHREAVTFPEEIALGDESLIPFLAGQSLNWSVR</sequence>
<comment type="function">
    <text evidence="1">Catalyzes the reversible cyclization of carbamoyl aspartate to dihydroorotate.</text>
</comment>
<comment type="catalytic activity">
    <reaction evidence="1">
        <text>(S)-dihydroorotate + H2O = N-carbamoyl-L-aspartate + H(+)</text>
        <dbReference type="Rhea" id="RHEA:24296"/>
        <dbReference type="ChEBI" id="CHEBI:15377"/>
        <dbReference type="ChEBI" id="CHEBI:15378"/>
        <dbReference type="ChEBI" id="CHEBI:30864"/>
        <dbReference type="ChEBI" id="CHEBI:32814"/>
        <dbReference type="EC" id="3.5.2.3"/>
    </reaction>
</comment>
<comment type="cofactor">
    <cofactor evidence="1">
        <name>Zn(2+)</name>
        <dbReference type="ChEBI" id="CHEBI:29105"/>
    </cofactor>
    <text evidence="1">Binds 2 Zn(2+) ions per subunit.</text>
</comment>
<comment type="pathway">
    <text evidence="1">Pyrimidine metabolism; UMP biosynthesis via de novo pathway; (S)-dihydroorotate from bicarbonate: step 3/3.</text>
</comment>
<comment type="subunit">
    <text evidence="1">Homodimer.</text>
</comment>
<comment type="similarity">
    <text evidence="1">Belongs to the metallo-dependent hydrolases superfamily. DHOase family. Class II DHOase subfamily.</text>
</comment>
<dbReference type="EC" id="3.5.2.3" evidence="1"/>
<dbReference type="EMBL" id="BX950851">
    <property type="protein sequence ID" value="CAG74692.1"/>
    <property type="molecule type" value="Genomic_DNA"/>
</dbReference>
<dbReference type="RefSeq" id="WP_011093363.1">
    <property type="nucleotide sequence ID" value="NC_004547.2"/>
</dbReference>
<dbReference type="SMR" id="Q6D698"/>
<dbReference type="STRING" id="218491.ECA1787"/>
<dbReference type="MEROPS" id="M38.A02"/>
<dbReference type="GeneID" id="57209502"/>
<dbReference type="KEGG" id="eca:ECA1787"/>
<dbReference type="PATRIC" id="fig|218491.5.peg.1814"/>
<dbReference type="eggNOG" id="COG0418">
    <property type="taxonomic scope" value="Bacteria"/>
</dbReference>
<dbReference type="HOGENOM" id="CLU_041558_1_0_6"/>
<dbReference type="OrthoDB" id="9808095at2"/>
<dbReference type="UniPathway" id="UPA00070">
    <property type="reaction ID" value="UER00117"/>
</dbReference>
<dbReference type="Proteomes" id="UP000007966">
    <property type="component" value="Chromosome"/>
</dbReference>
<dbReference type="GO" id="GO:0005829">
    <property type="term" value="C:cytosol"/>
    <property type="evidence" value="ECO:0007669"/>
    <property type="project" value="TreeGrafter"/>
</dbReference>
<dbReference type="GO" id="GO:0004151">
    <property type="term" value="F:dihydroorotase activity"/>
    <property type="evidence" value="ECO:0007669"/>
    <property type="project" value="UniProtKB-UniRule"/>
</dbReference>
<dbReference type="GO" id="GO:0008270">
    <property type="term" value="F:zinc ion binding"/>
    <property type="evidence" value="ECO:0007669"/>
    <property type="project" value="UniProtKB-UniRule"/>
</dbReference>
<dbReference type="GO" id="GO:0006207">
    <property type="term" value="P:'de novo' pyrimidine nucleobase biosynthetic process"/>
    <property type="evidence" value="ECO:0007669"/>
    <property type="project" value="TreeGrafter"/>
</dbReference>
<dbReference type="GO" id="GO:0044205">
    <property type="term" value="P:'de novo' UMP biosynthetic process"/>
    <property type="evidence" value="ECO:0007669"/>
    <property type="project" value="UniProtKB-UniRule"/>
</dbReference>
<dbReference type="CDD" id="cd01294">
    <property type="entry name" value="DHOase"/>
    <property type="match status" value="1"/>
</dbReference>
<dbReference type="FunFam" id="3.20.20.140:FF:000006">
    <property type="entry name" value="Dihydroorotase"/>
    <property type="match status" value="1"/>
</dbReference>
<dbReference type="Gene3D" id="3.20.20.140">
    <property type="entry name" value="Metal-dependent hydrolases"/>
    <property type="match status" value="1"/>
</dbReference>
<dbReference type="HAMAP" id="MF_00219">
    <property type="entry name" value="PyrC_classII"/>
    <property type="match status" value="1"/>
</dbReference>
<dbReference type="InterPro" id="IPR006680">
    <property type="entry name" value="Amidohydro-rel"/>
</dbReference>
<dbReference type="InterPro" id="IPR004721">
    <property type="entry name" value="DHOdimr"/>
</dbReference>
<dbReference type="InterPro" id="IPR002195">
    <property type="entry name" value="Dihydroorotase_CS"/>
</dbReference>
<dbReference type="InterPro" id="IPR032466">
    <property type="entry name" value="Metal_Hydrolase"/>
</dbReference>
<dbReference type="NCBIfam" id="TIGR00856">
    <property type="entry name" value="pyrC_dimer"/>
    <property type="match status" value="1"/>
</dbReference>
<dbReference type="PANTHER" id="PTHR43137">
    <property type="entry name" value="DIHYDROOROTASE"/>
    <property type="match status" value="1"/>
</dbReference>
<dbReference type="PANTHER" id="PTHR43137:SF1">
    <property type="entry name" value="DIHYDROOROTASE"/>
    <property type="match status" value="1"/>
</dbReference>
<dbReference type="Pfam" id="PF01979">
    <property type="entry name" value="Amidohydro_1"/>
    <property type="match status" value="1"/>
</dbReference>
<dbReference type="PIRSF" id="PIRSF001237">
    <property type="entry name" value="DHOdimr"/>
    <property type="match status" value="1"/>
</dbReference>
<dbReference type="SUPFAM" id="SSF51556">
    <property type="entry name" value="Metallo-dependent hydrolases"/>
    <property type="match status" value="1"/>
</dbReference>
<dbReference type="PROSITE" id="PS00483">
    <property type="entry name" value="DIHYDROOROTASE_2"/>
    <property type="match status" value="1"/>
</dbReference>
<evidence type="ECO:0000255" key="1">
    <source>
        <dbReference type="HAMAP-Rule" id="MF_00219"/>
    </source>
</evidence>
<protein>
    <recommendedName>
        <fullName evidence="1">Dihydroorotase</fullName>
        <shortName evidence="1">DHOase</shortName>
        <ecNumber evidence="1">3.5.2.3</ecNumber>
    </recommendedName>
</protein>
<organism>
    <name type="scientific">Pectobacterium atrosepticum (strain SCRI 1043 / ATCC BAA-672)</name>
    <name type="common">Erwinia carotovora subsp. atroseptica</name>
    <dbReference type="NCBI Taxonomy" id="218491"/>
    <lineage>
        <taxon>Bacteria</taxon>
        <taxon>Pseudomonadati</taxon>
        <taxon>Pseudomonadota</taxon>
        <taxon>Gammaproteobacteria</taxon>
        <taxon>Enterobacterales</taxon>
        <taxon>Pectobacteriaceae</taxon>
        <taxon>Pectobacterium</taxon>
    </lineage>
</organism>